<organism>
    <name type="scientific">Staphylococcus aureus</name>
    <dbReference type="NCBI Taxonomy" id="1280"/>
    <lineage>
        <taxon>Bacteria</taxon>
        <taxon>Bacillati</taxon>
        <taxon>Bacillota</taxon>
        <taxon>Bacilli</taxon>
        <taxon>Bacillales</taxon>
        <taxon>Staphylococcaceae</taxon>
        <taxon>Staphylococcus</taxon>
    </lineage>
</organism>
<comment type="function">
    <text evidence="1 7">Member of the two-component regulatory system WalK/WalR that regulates genes involved in cell wall metabolism, virulence regulation, biofilm production, oxidative stress resistance and antibiotic resistance via direct or indirect regulation of autolysins (PubMed:31296851). Functions as a transcription regulator by direct binding to promoter regions (By similarity).</text>
</comment>
<comment type="subcellular location">
    <subcellularLocation>
        <location evidence="8">Cytoplasm</location>
    </subcellularLocation>
</comment>
<comment type="PTM">
    <text evidence="2 5 7">Phosphorylated by WalK on Asp-53 (PubMed:12867749, PubMed:31296851). Phosphorylated by PknB on Thr-101 (By similarity).</text>
</comment>
<comment type="miscellaneous">
    <text evidence="6">Overexpression of walK/walR reduces susceptibility against vancomycin.</text>
</comment>
<comment type="sequence caution" evidence="8">
    <conflict type="erroneous initiation">
        <sequence resource="EMBL-CDS" id="CAB65399"/>
    </conflict>
</comment>
<dbReference type="EMBL" id="AJ012052">
    <property type="protein sequence ID" value="CAB65399.1"/>
    <property type="status" value="ALT_INIT"/>
    <property type="molecule type" value="Genomic_DNA"/>
</dbReference>
<dbReference type="RefSeq" id="WP_000101976.1">
    <property type="nucleotide sequence ID" value="NZ_WYDB01000001.1"/>
</dbReference>
<dbReference type="PDB" id="2ZXJ">
    <property type="method" value="X-ray"/>
    <property type="resolution" value="1.87 A"/>
    <property type="chains" value="A/B=123-233"/>
</dbReference>
<dbReference type="PDBsum" id="2ZXJ"/>
<dbReference type="SMR" id="Q9RDT5"/>
<dbReference type="GeneID" id="98344401"/>
<dbReference type="OMA" id="MDVDRHT"/>
<dbReference type="OrthoDB" id="9790442at2"/>
<dbReference type="EvolutionaryTrace" id="Q9RDT5"/>
<dbReference type="GO" id="GO:0005829">
    <property type="term" value="C:cytosol"/>
    <property type="evidence" value="ECO:0007669"/>
    <property type="project" value="TreeGrafter"/>
</dbReference>
<dbReference type="GO" id="GO:0032993">
    <property type="term" value="C:protein-DNA complex"/>
    <property type="evidence" value="ECO:0007669"/>
    <property type="project" value="TreeGrafter"/>
</dbReference>
<dbReference type="GO" id="GO:0000156">
    <property type="term" value="F:phosphorelay response regulator activity"/>
    <property type="evidence" value="ECO:0007669"/>
    <property type="project" value="TreeGrafter"/>
</dbReference>
<dbReference type="GO" id="GO:0000976">
    <property type="term" value="F:transcription cis-regulatory region binding"/>
    <property type="evidence" value="ECO:0007669"/>
    <property type="project" value="TreeGrafter"/>
</dbReference>
<dbReference type="GO" id="GO:0006355">
    <property type="term" value="P:regulation of DNA-templated transcription"/>
    <property type="evidence" value="ECO:0007669"/>
    <property type="project" value="InterPro"/>
</dbReference>
<dbReference type="CDD" id="cd17614">
    <property type="entry name" value="REC_OmpR_YycF-like"/>
    <property type="match status" value="1"/>
</dbReference>
<dbReference type="CDD" id="cd00383">
    <property type="entry name" value="trans_reg_C"/>
    <property type="match status" value="1"/>
</dbReference>
<dbReference type="FunFam" id="1.10.10.10:FF:000089">
    <property type="entry name" value="Alkaline phosphatase synthesis response regulator"/>
    <property type="match status" value="1"/>
</dbReference>
<dbReference type="FunFam" id="3.40.50.2300:FF:000052">
    <property type="entry name" value="DNA-binding response regulator YycF"/>
    <property type="match status" value="1"/>
</dbReference>
<dbReference type="Gene3D" id="3.40.50.2300">
    <property type="match status" value="1"/>
</dbReference>
<dbReference type="Gene3D" id="6.10.250.690">
    <property type="match status" value="1"/>
</dbReference>
<dbReference type="Gene3D" id="1.10.10.10">
    <property type="entry name" value="Winged helix-like DNA-binding domain superfamily/Winged helix DNA-binding domain"/>
    <property type="match status" value="1"/>
</dbReference>
<dbReference type="InterPro" id="IPR011006">
    <property type="entry name" value="CheY-like_superfamily"/>
</dbReference>
<dbReference type="InterPro" id="IPR001867">
    <property type="entry name" value="OmpR/PhoB-type_DNA-bd"/>
</dbReference>
<dbReference type="InterPro" id="IPR047791">
    <property type="entry name" value="Resp_reg_WalR"/>
</dbReference>
<dbReference type="InterPro" id="IPR016032">
    <property type="entry name" value="Sig_transdc_resp-reg_C-effctor"/>
</dbReference>
<dbReference type="InterPro" id="IPR001789">
    <property type="entry name" value="Sig_transdc_resp-reg_receiver"/>
</dbReference>
<dbReference type="InterPro" id="IPR039420">
    <property type="entry name" value="WalR-like"/>
</dbReference>
<dbReference type="InterPro" id="IPR036388">
    <property type="entry name" value="WH-like_DNA-bd_sf"/>
</dbReference>
<dbReference type="NCBIfam" id="NF040534">
    <property type="entry name" value="resp_reg_YycF"/>
    <property type="match status" value="1"/>
</dbReference>
<dbReference type="PANTHER" id="PTHR48111:SF40">
    <property type="entry name" value="PHOSPHATE REGULON TRANSCRIPTIONAL REGULATORY PROTEIN PHOB"/>
    <property type="match status" value="1"/>
</dbReference>
<dbReference type="PANTHER" id="PTHR48111">
    <property type="entry name" value="REGULATOR OF RPOS"/>
    <property type="match status" value="1"/>
</dbReference>
<dbReference type="Pfam" id="PF00072">
    <property type="entry name" value="Response_reg"/>
    <property type="match status" value="1"/>
</dbReference>
<dbReference type="Pfam" id="PF00486">
    <property type="entry name" value="Trans_reg_C"/>
    <property type="match status" value="1"/>
</dbReference>
<dbReference type="SMART" id="SM00448">
    <property type="entry name" value="REC"/>
    <property type="match status" value="1"/>
</dbReference>
<dbReference type="SMART" id="SM00862">
    <property type="entry name" value="Trans_reg_C"/>
    <property type="match status" value="1"/>
</dbReference>
<dbReference type="SUPFAM" id="SSF46894">
    <property type="entry name" value="C-terminal effector domain of the bipartite response regulators"/>
    <property type="match status" value="1"/>
</dbReference>
<dbReference type="SUPFAM" id="SSF52172">
    <property type="entry name" value="CheY-like"/>
    <property type="match status" value="1"/>
</dbReference>
<dbReference type="PROSITE" id="PS51755">
    <property type="entry name" value="OMPR_PHOB"/>
    <property type="match status" value="1"/>
</dbReference>
<dbReference type="PROSITE" id="PS50110">
    <property type="entry name" value="RESPONSE_REGULATORY"/>
    <property type="match status" value="1"/>
</dbReference>
<keyword id="KW-0002">3D-structure</keyword>
<keyword id="KW-0010">Activator</keyword>
<keyword id="KW-0963">Cytoplasm</keyword>
<keyword id="KW-0238">DNA-binding</keyword>
<keyword id="KW-0597">Phosphoprotein</keyword>
<keyword id="KW-0804">Transcription</keyword>
<keyword id="KW-0805">Transcription regulation</keyword>
<keyword id="KW-0902">Two-component regulatory system</keyword>
<proteinExistence type="evidence at protein level"/>
<feature type="chain" id="PRO_0000353031" description="Transcriptional regulatory protein WalR">
    <location>
        <begin position="1"/>
        <end position="233"/>
    </location>
</feature>
<feature type="domain" description="Response regulatory" evidence="3">
    <location>
        <begin position="4"/>
        <end position="117"/>
    </location>
</feature>
<feature type="DNA-binding region" description="OmpR/PhoB-type" evidence="4">
    <location>
        <begin position="132"/>
        <end position="231"/>
    </location>
</feature>
<feature type="modified residue" description="4-aspartylphosphate" evidence="3 7">
    <location>
        <position position="53"/>
    </location>
</feature>
<feature type="modified residue" description="Phosphothreonine" evidence="2">
    <location>
        <position position="101"/>
    </location>
</feature>
<feature type="mutagenesis site" description="Loss of phosphorylation by WalK." evidence="7">
    <original>D</original>
    <variation>A</variation>
    <location>
        <position position="53"/>
    </location>
</feature>
<feature type="strand" evidence="9">
    <location>
        <begin position="135"/>
        <end position="137"/>
    </location>
</feature>
<feature type="strand" evidence="9">
    <location>
        <begin position="140"/>
        <end position="143"/>
    </location>
</feature>
<feature type="helix" evidence="9">
    <location>
        <begin position="144"/>
        <end position="146"/>
    </location>
</feature>
<feature type="strand" evidence="9">
    <location>
        <begin position="148"/>
        <end position="151"/>
    </location>
</feature>
<feature type="strand" evidence="9">
    <location>
        <begin position="154"/>
        <end position="156"/>
    </location>
</feature>
<feature type="helix" evidence="9">
    <location>
        <begin position="160"/>
        <end position="170"/>
    </location>
</feature>
<feature type="turn" evidence="9">
    <location>
        <begin position="171"/>
        <end position="174"/>
    </location>
</feature>
<feature type="helix" evidence="9">
    <location>
        <begin position="179"/>
        <end position="187"/>
    </location>
</feature>
<feature type="helix" evidence="9">
    <location>
        <begin position="196"/>
        <end position="209"/>
    </location>
</feature>
<feature type="strand" evidence="9">
    <location>
        <begin position="217"/>
        <end position="222"/>
    </location>
</feature>
<feature type="turn" evidence="9">
    <location>
        <begin position="223"/>
        <end position="225"/>
    </location>
</feature>
<feature type="strand" evidence="9">
    <location>
        <begin position="226"/>
        <end position="229"/>
    </location>
</feature>
<gene>
    <name type="primary">walR</name>
    <name type="synonym">vicR</name>
    <name type="synonym">yycF</name>
</gene>
<sequence>MARKVVVVDDEKPIADILEFNLKKEGYDVYCAYDGNDAVDLIYEEEPDIVLLDIMLPGRDGMEVCREVRKKYEMPIIMLTAKDSEIDKVLGLELGADDYVTKPFSTRELIARVKANLRRHYSQPAQDTGNVTNEITIKDIVIYPDAYSIKKRGEDIELTHREFELFHYLSKHMGQVMTREHLLQTVWGYDYFGDVRTVDVTIRRLREKIEDDPSHPEYIVTRRGVGYFLQQHE</sequence>
<name>WALR_STAAU</name>
<reference key="1">
    <citation type="journal article" date="2002" name="Infect. Immun.">
        <title>Genetic analysis and functional characterization of the Streptococcus pneumoniae vic operon.</title>
        <authorList>
            <person name="Wagner C."/>
            <person name="de Saizieu A."/>
            <person name="Schoenfeld H.-J."/>
            <person name="Kamber M."/>
            <person name="Lange R."/>
            <person name="Thompson C.J."/>
            <person name="Page M.G."/>
        </authorList>
    </citation>
    <scope>NUCLEOTIDE SEQUENCE [GENOMIC DNA]</scope>
</reference>
<reference key="2">
    <citation type="journal article" date="2003" name="J. Mol. Microbiol. Biotechnol.">
        <title>Biochemical characterization of the first essential two-component signal transduction system from Staphylococcus aureus and Streptococcus pneumoniae.</title>
        <authorList>
            <person name="Clausen V.A."/>
            <person name="Bae W."/>
            <person name="Throup J."/>
            <person name="Burnham M.K.R."/>
            <person name="Rosenberg M."/>
            <person name="Wallis N.G."/>
        </authorList>
    </citation>
    <scope>PHOSPHORYLATION</scope>
    <source>
        <strain>WCUH29 / NCIMB 40771</strain>
    </source>
</reference>
<reference key="3">
    <citation type="journal article" date="2007" name="Int. J. Med. Microbiol.">
        <title>Role of insertion elements and yycFG in the development of decreased susceptibility to vancomycin in Staphylococcus aureus.</title>
        <authorList>
            <person name="Jansen A."/>
            <person name="Tuerck M."/>
            <person name="Szekat C."/>
            <person name="Nagel M."/>
            <person name="Clever I."/>
            <person name="Bierbaum G."/>
        </authorList>
    </citation>
    <scope>OVEREXPRESSION</scope>
    <source>
        <strain>SA137/93A</strain>
    </source>
</reference>
<reference key="4">
    <citation type="journal article" date="2019" name="Nat. Commun.">
        <title>Zinc-binding to the cytoplasmic PAS domain regulates the essential WalK histidine kinase of Staphylococcus aureus.</title>
        <authorList>
            <person name="Monk I.R."/>
            <person name="Shaikh N."/>
            <person name="Begg S.L."/>
            <person name="Gajdiss M."/>
            <person name="Sharkey L.K.R."/>
            <person name="Lee J.Y.H."/>
            <person name="Pidot S.J."/>
            <person name="Seemann T."/>
            <person name="Kuiper M."/>
            <person name="Winnen B."/>
            <person name="Hvorup R."/>
            <person name="Collins B.M."/>
            <person name="Bierbaum G."/>
            <person name="Udagedara S.R."/>
            <person name="Morey J.R."/>
            <person name="Pulyani N."/>
            <person name="Howden B.P."/>
            <person name="Maher M.J."/>
            <person name="McDevitt C.A."/>
            <person name="King G.F."/>
            <person name="Stinear T.P."/>
        </authorList>
    </citation>
    <scope>FUNCTION</scope>
    <scope>PHOSPHORYLATION AT ASP-53</scope>
    <scope>MUTAGENESIS OF ASP-53</scope>
</reference>
<evidence type="ECO:0000250" key="1">
    <source>
        <dbReference type="UniProtKB" id="Q2G2U6"/>
    </source>
</evidence>
<evidence type="ECO:0000250" key="2">
    <source>
        <dbReference type="UniProtKB" id="Q7A8E1"/>
    </source>
</evidence>
<evidence type="ECO:0000255" key="3">
    <source>
        <dbReference type="PROSITE-ProRule" id="PRU00169"/>
    </source>
</evidence>
<evidence type="ECO:0000255" key="4">
    <source>
        <dbReference type="PROSITE-ProRule" id="PRU01091"/>
    </source>
</evidence>
<evidence type="ECO:0000269" key="5">
    <source>
    </source>
</evidence>
<evidence type="ECO:0000269" key="6">
    <source>
    </source>
</evidence>
<evidence type="ECO:0000269" key="7">
    <source>
    </source>
</evidence>
<evidence type="ECO:0000305" key="8"/>
<evidence type="ECO:0007829" key="9">
    <source>
        <dbReference type="PDB" id="2ZXJ"/>
    </source>
</evidence>
<protein>
    <recommendedName>
        <fullName evidence="8">Transcriptional regulatory protein WalR</fullName>
    </recommendedName>
</protein>
<accession>Q9RDT5</accession>